<name>ACOX2_YARLI</name>
<evidence type="ECO:0000269" key="1">
    <source>
    </source>
</evidence>
<evidence type="ECO:0000305" key="2"/>
<gene>
    <name type="primary">POX2</name>
    <name type="synonym">ACO2</name>
    <name type="ordered locus">YALI0F10857g</name>
</gene>
<reference key="1">
    <citation type="journal article" date="2002" name="Arch. Biochem. Biophys.">
        <title>The acyl-CoA oxidases from the yeast Yarrowia lipolytica: characterization of Aox2p.</title>
        <authorList>
            <person name="Luo Y.S."/>
            <person name="Nicaud J.-M."/>
            <person name="Van Veldhoven P.P."/>
            <person name="Chardot T."/>
        </authorList>
    </citation>
    <scope>NUCLEOTIDE SEQUENCE [GENOMIC DNA]</scope>
    <scope>CHARACTERIZATION</scope>
    <source>
        <strain>ATCC 20460 / W29 / CBS 7504 / IFP29</strain>
    </source>
</reference>
<reference key="2">
    <citation type="journal article" date="2004" name="Nature">
        <title>Genome evolution in yeasts.</title>
        <authorList>
            <person name="Dujon B."/>
            <person name="Sherman D."/>
            <person name="Fischer G."/>
            <person name="Durrens P."/>
            <person name="Casaregola S."/>
            <person name="Lafontaine I."/>
            <person name="de Montigny J."/>
            <person name="Marck C."/>
            <person name="Neuveglise C."/>
            <person name="Talla E."/>
            <person name="Goffard N."/>
            <person name="Frangeul L."/>
            <person name="Aigle M."/>
            <person name="Anthouard V."/>
            <person name="Babour A."/>
            <person name="Barbe V."/>
            <person name="Barnay S."/>
            <person name="Blanchin S."/>
            <person name="Beckerich J.-M."/>
            <person name="Beyne E."/>
            <person name="Bleykasten C."/>
            <person name="Boisrame A."/>
            <person name="Boyer J."/>
            <person name="Cattolico L."/>
            <person name="Confanioleri F."/>
            <person name="de Daruvar A."/>
            <person name="Despons L."/>
            <person name="Fabre E."/>
            <person name="Fairhead C."/>
            <person name="Ferry-Dumazet H."/>
            <person name="Groppi A."/>
            <person name="Hantraye F."/>
            <person name="Hennequin C."/>
            <person name="Jauniaux N."/>
            <person name="Joyet P."/>
            <person name="Kachouri R."/>
            <person name="Kerrest A."/>
            <person name="Koszul R."/>
            <person name="Lemaire M."/>
            <person name="Lesur I."/>
            <person name="Ma L."/>
            <person name="Muller H."/>
            <person name="Nicaud J.-M."/>
            <person name="Nikolski M."/>
            <person name="Oztas S."/>
            <person name="Ozier-Kalogeropoulos O."/>
            <person name="Pellenz S."/>
            <person name="Potier S."/>
            <person name="Richard G.-F."/>
            <person name="Straub M.-L."/>
            <person name="Suleau A."/>
            <person name="Swennen D."/>
            <person name="Tekaia F."/>
            <person name="Wesolowski-Louvel M."/>
            <person name="Westhof E."/>
            <person name="Wirth B."/>
            <person name="Zeniou-Meyer M."/>
            <person name="Zivanovic Y."/>
            <person name="Bolotin-Fukuhara M."/>
            <person name="Thierry A."/>
            <person name="Bouchier C."/>
            <person name="Caudron B."/>
            <person name="Scarpelli C."/>
            <person name="Gaillardin C."/>
            <person name="Weissenbach J."/>
            <person name="Wincker P."/>
            <person name="Souciet J.-L."/>
        </authorList>
    </citation>
    <scope>NUCLEOTIDE SEQUENCE [LARGE SCALE GENOMIC DNA]</scope>
    <source>
        <strain>CLIB 122 / E 150</strain>
    </source>
</reference>
<reference key="3">
    <citation type="journal article" date="2002" name="J. Cell Biol.">
        <title>Acyl-CoA oxidase is imported as a heteropentameric, cofactor-containing complex into peroxisomes of Yarrowia lipolytica.</title>
        <authorList>
            <person name="Titorenko V.I."/>
            <person name="Nicaud J.-M."/>
            <person name="Wang H."/>
            <person name="Chan H."/>
            <person name="Rachubinski R.A."/>
        </authorList>
    </citation>
    <scope>SUBUNIT</scope>
    <scope>SUBCELLULAR LOCATION</scope>
</reference>
<proteinExistence type="evidence at protein level"/>
<feature type="chain" id="PRO_0000204702" description="Acyl-coenzyme A oxidase 2">
    <location>
        <begin position="1"/>
        <end position="700"/>
    </location>
</feature>
<accession>O74935</accession>
<accession>Q6C248</accession>
<protein>
    <recommendedName>
        <fullName>Acyl-coenzyme A oxidase 2</fullName>
        <shortName>Acyl-CoA oxidase 2</shortName>
        <ecNumber>1.3.3.6</ecNumber>
    </recommendedName>
</protein>
<comment type="function">
    <text>Oxidizes strain chain acyl-CoAs with a chain length of 10 to 14 carbons. Also active toward the 2S isomers of acyl-CoA-esters containing a 2-methyl group.</text>
</comment>
<comment type="catalytic activity">
    <reaction>
        <text>a 2,3-saturated acyl-CoA + O2 = a (2E)-enoyl-CoA + H2O2</text>
        <dbReference type="Rhea" id="RHEA:38959"/>
        <dbReference type="ChEBI" id="CHEBI:15379"/>
        <dbReference type="ChEBI" id="CHEBI:16240"/>
        <dbReference type="ChEBI" id="CHEBI:58856"/>
        <dbReference type="ChEBI" id="CHEBI:65111"/>
        <dbReference type="EC" id="1.3.3.6"/>
    </reaction>
</comment>
<comment type="cofactor">
    <cofactor>
        <name>FAD</name>
        <dbReference type="ChEBI" id="CHEBI:57692"/>
    </cofactor>
</comment>
<comment type="pathway">
    <text>Lipid metabolism; peroxisomal fatty acid beta-oxidation.</text>
</comment>
<comment type="subunit">
    <text evidence="1">Heteropentamer composed of five different subunits.</text>
</comment>
<comment type="subcellular location">
    <subcellularLocation>
        <location evidence="1">Peroxisome</location>
    </subcellularLocation>
</comment>
<comment type="similarity">
    <text evidence="2">Belongs to the acyl-CoA oxidase family.</text>
</comment>
<organism>
    <name type="scientific">Yarrowia lipolytica (strain CLIB 122 / E 150)</name>
    <name type="common">Yeast</name>
    <name type="synonym">Candida lipolytica</name>
    <dbReference type="NCBI Taxonomy" id="284591"/>
    <lineage>
        <taxon>Eukaryota</taxon>
        <taxon>Fungi</taxon>
        <taxon>Dikarya</taxon>
        <taxon>Ascomycota</taxon>
        <taxon>Saccharomycotina</taxon>
        <taxon>Dipodascomycetes</taxon>
        <taxon>Dipodascales</taxon>
        <taxon>Dipodascales incertae sedis</taxon>
        <taxon>Yarrowia</taxon>
    </lineage>
</organism>
<dbReference type="EC" id="1.3.3.6"/>
<dbReference type="EMBL" id="AJ001300">
    <property type="protein sequence ID" value="CAA04660.1"/>
    <property type="molecule type" value="Genomic_DNA"/>
</dbReference>
<dbReference type="EMBL" id="CR382132">
    <property type="protein sequence ID" value="CAG78071.1"/>
    <property type="molecule type" value="Genomic_DNA"/>
</dbReference>
<dbReference type="RefSeq" id="XP_505264.1">
    <property type="nucleotide sequence ID" value="XM_505264.1"/>
</dbReference>
<dbReference type="SMR" id="O74935"/>
<dbReference type="FunCoup" id="O74935">
    <property type="interactions" value="432"/>
</dbReference>
<dbReference type="STRING" id="284591.O74935"/>
<dbReference type="EnsemblFungi" id="CAG78071">
    <property type="protein sequence ID" value="CAG78071"/>
    <property type="gene ID" value="YALI0_F10857g"/>
</dbReference>
<dbReference type="KEGG" id="yli:2907872"/>
<dbReference type="VEuPathDB" id="FungiDB:YALI0_F10857g"/>
<dbReference type="HOGENOM" id="CLU_014629_3_1_1"/>
<dbReference type="InParanoid" id="O74935"/>
<dbReference type="OMA" id="AHGTNAK"/>
<dbReference type="OrthoDB" id="60257at4891"/>
<dbReference type="BRENDA" id="1.3.3.6">
    <property type="organism ID" value="1122"/>
</dbReference>
<dbReference type="UniPathway" id="UPA00661"/>
<dbReference type="Proteomes" id="UP000001300">
    <property type="component" value="Chromosome F"/>
</dbReference>
<dbReference type="GO" id="GO:0005777">
    <property type="term" value="C:peroxisome"/>
    <property type="evidence" value="ECO:0000318"/>
    <property type="project" value="GO_Central"/>
</dbReference>
<dbReference type="GO" id="GO:0003997">
    <property type="term" value="F:acyl-CoA oxidase activity"/>
    <property type="evidence" value="ECO:0000318"/>
    <property type="project" value="GO_Central"/>
</dbReference>
<dbReference type="GO" id="GO:0071949">
    <property type="term" value="F:FAD binding"/>
    <property type="evidence" value="ECO:0007669"/>
    <property type="project" value="InterPro"/>
</dbReference>
<dbReference type="GO" id="GO:0005504">
    <property type="term" value="F:fatty acid binding"/>
    <property type="evidence" value="ECO:0000318"/>
    <property type="project" value="GO_Central"/>
</dbReference>
<dbReference type="GO" id="GO:0050660">
    <property type="term" value="F:flavin adenine dinucleotide binding"/>
    <property type="evidence" value="ECO:0000318"/>
    <property type="project" value="GO_Central"/>
</dbReference>
<dbReference type="GO" id="GO:0033540">
    <property type="term" value="P:fatty acid beta-oxidation using acyl-CoA oxidase"/>
    <property type="evidence" value="ECO:0000318"/>
    <property type="project" value="GO_Central"/>
</dbReference>
<dbReference type="FunFam" id="1.10.540.10:FF:000018">
    <property type="entry name" value="Acyl-coenzyme A oxidase"/>
    <property type="match status" value="1"/>
</dbReference>
<dbReference type="FunFam" id="1.20.140.10:FF:000013">
    <property type="entry name" value="Acyl-coenzyme A oxidase"/>
    <property type="match status" value="1"/>
</dbReference>
<dbReference type="FunFam" id="1.20.140.10:FF:000015">
    <property type="entry name" value="Acyl-coenzyme A oxidase"/>
    <property type="match status" value="1"/>
</dbReference>
<dbReference type="FunFam" id="2.40.110.10:FF:000003">
    <property type="entry name" value="Acyl-coenzyme A oxidase"/>
    <property type="match status" value="1"/>
</dbReference>
<dbReference type="Gene3D" id="1.10.540.10">
    <property type="entry name" value="Acyl-CoA dehydrogenase/oxidase, N-terminal domain"/>
    <property type="match status" value="1"/>
</dbReference>
<dbReference type="Gene3D" id="2.40.110.10">
    <property type="entry name" value="Butyryl-CoA Dehydrogenase, subunit A, domain 2"/>
    <property type="match status" value="1"/>
</dbReference>
<dbReference type="Gene3D" id="1.20.140.10">
    <property type="entry name" value="Butyryl-CoA Dehydrogenase, subunit A, domain 3"/>
    <property type="match status" value="2"/>
</dbReference>
<dbReference type="InterPro" id="IPR055060">
    <property type="entry name" value="ACOX_C_alpha1"/>
</dbReference>
<dbReference type="InterPro" id="IPR029320">
    <property type="entry name" value="Acyl-CoA_ox_N"/>
</dbReference>
<dbReference type="InterPro" id="IPR006091">
    <property type="entry name" value="Acyl-CoA_Oxase/DH_mid-dom"/>
</dbReference>
<dbReference type="InterPro" id="IPR046373">
    <property type="entry name" value="Acyl-CoA_Oxase/DH_mid-dom_sf"/>
</dbReference>
<dbReference type="InterPro" id="IPR012258">
    <property type="entry name" value="Acyl-CoA_oxidase"/>
</dbReference>
<dbReference type="InterPro" id="IPR002655">
    <property type="entry name" value="Acyl-CoA_oxidase_C"/>
</dbReference>
<dbReference type="InterPro" id="IPR036250">
    <property type="entry name" value="AcylCo_DH-like_C"/>
</dbReference>
<dbReference type="InterPro" id="IPR037069">
    <property type="entry name" value="AcylCoA_DH/ox_N_sf"/>
</dbReference>
<dbReference type="InterPro" id="IPR009100">
    <property type="entry name" value="AcylCoA_DH/oxidase_NM_dom_sf"/>
</dbReference>
<dbReference type="PANTHER" id="PTHR10909:SF352">
    <property type="entry name" value="ACYL-COENZYME A OXIDASE-LIKE PROTEIN"/>
    <property type="match status" value="1"/>
</dbReference>
<dbReference type="PANTHER" id="PTHR10909">
    <property type="entry name" value="ELECTRON TRANSPORT OXIDOREDUCTASE"/>
    <property type="match status" value="1"/>
</dbReference>
<dbReference type="Pfam" id="PF01756">
    <property type="entry name" value="ACOX"/>
    <property type="match status" value="1"/>
</dbReference>
<dbReference type="Pfam" id="PF22924">
    <property type="entry name" value="ACOX_C_alpha1"/>
    <property type="match status" value="1"/>
</dbReference>
<dbReference type="Pfam" id="PF02770">
    <property type="entry name" value="Acyl-CoA_dh_M"/>
    <property type="match status" value="1"/>
</dbReference>
<dbReference type="Pfam" id="PF14749">
    <property type="entry name" value="Acyl-CoA_ox_N"/>
    <property type="match status" value="1"/>
</dbReference>
<dbReference type="PIRSF" id="PIRSF000168">
    <property type="entry name" value="Acyl-CoA_oxidase"/>
    <property type="match status" value="1"/>
</dbReference>
<dbReference type="SUPFAM" id="SSF47203">
    <property type="entry name" value="Acyl-CoA dehydrogenase C-terminal domain-like"/>
    <property type="match status" value="2"/>
</dbReference>
<dbReference type="SUPFAM" id="SSF56645">
    <property type="entry name" value="Acyl-CoA dehydrogenase NM domain-like"/>
    <property type="match status" value="1"/>
</dbReference>
<keyword id="KW-0274">FAD</keyword>
<keyword id="KW-0276">Fatty acid metabolism</keyword>
<keyword id="KW-0285">Flavoprotein</keyword>
<keyword id="KW-0443">Lipid metabolism</keyword>
<keyword id="KW-0560">Oxidoreductase</keyword>
<keyword id="KW-0576">Peroxisome</keyword>
<keyword id="KW-1185">Reference proteome</keyword>
<sequence>MNPNNTGTIEINGKEYNTFTEPPVAMAQERAKTSFPVREMTYFLDGGEKNTLKNEQIMEEIERDPLFNNDNYYDLNKEQIRELTMERVAKLSLFVRDQPEDDIKKRFALIGIADMGTYTRLGVHYGLFFGAVRGTGTAEQFGHWISKGAGDLRKFYGCFSMTELGHGSNLAGLETTAIYDEETDEFIINTPHIAATKWWIGGAAHTATHTVVFARLIVKGKDYGVKTFVVQLRNINDHSLKVGISIGDIGKKMGRDGIDNGWIQFTNVRIPRQNLLMKYTKVDREGNVTQPPLAQLTYGSLITGRVSMASDSHQVGKRFITIALRYACIRRQFSTTPGQPETKIIDYPYHQRRLLPLLAYVYALKMTADEVGALFSRTMLKMDDLKPDDKAGLNEVVSDVKELFSVSAGLKAFSTWACADVIDKTRQACGGHGYSGYNGFGQAYADWVVQCTWEGDNNILTLSAGRALIQSAVALRKGEPVGNAVSYLKRYKDLANAKLNGRSLTDPKVLVEAWEVAAGNIINRATDQYEKLIGEGLNADQAFEVLSQQRFQAAKVHTRRHLIAAFFSRIDTEAGEAIKQPLLNLALLFALWSIEEDSGLFLREGFLEPKDIDTVTELVNKYCTTVREEVIGYTDAFNLSDYFINAPIGCYDGDAYRHYFQKVNEQNPARDPRPPYYASTLKPFLFREEEDDDICELDEE</sequence>